<evidence type="ECO:0000250" key="1"/>
<evidence type="ECO:0000250" key="2">
    <source>
        <dbReference type="UniProtKB" id="O00151"/>
    </source>
</evidence>
<evidence type="ECO:0000255" key="3">
    <source>
        <dbReference type="PROSITE-ProRule" id="PRU00125"/>
    </source>
</evidence>
<evidence type="ECO:0000255" key="4">
    <source>
        <dbReference type="PROSITE-ProRule" id="PRU00143"/>
    </source>
</evidence>
<evidence type="ECO:0000256" key="5">
    <source>
        <dbReference type="SAM" id="MobiDB-lite"/>
    </source>
</evidence>
<evidence type="ECO:0000269" key="6">
    <source>
    </source>
</evidence>
<evidence type="ECO:0000305" key="7"/>
<evidence type="ECO:0007744" key="8">
    <source>
    </source>
</evidence>
<name>PDLI1_RAT</name>
<sequence length="327" mass="35584">MTTQQIVLQGPGPWGFRLVGGKDFEQPLAISRVTPGSKAAIANLCIGDLITAIDGEDTSSMTHLEAQNKIKGCVDNMTLTVSRSEQKIWSPLVTEEGKRHPYKMNLASEPQEVLHIGSAHNRSAMPFTASPAPGTRVITNQYNSPTGLYSSENISNFNNAVESKTSASGEEANSRPSAQPHPSGGLIIDKESEVYKMLQEKQELNEPPKQSTSFLVLQEILESDGKGDPNKPSGFRSVKAPVTKVAASVGNAQKLPICDKCGTGIVGVFVKLRDHHRHPECYVCTDCGINLKQKGHFFVGDQIYCEKHARERVTPPEGYDVVTVFPK</sequence>
<comment type="function">
    <text evidence="2 6">Cytoskeletal protein that may act as an adapter that brings other proteins (like kinases) to the cytoskeleton (By similarity). Involved in assembly, disassembly and directioning of stress fibers in fibroblasts. Required for the localization of ACTN1 and PALLD to stress fibers. Required for cell migration and in maintaining cell polarity of fibroblasts (PubMed:22659164).</text>
</comment>
<comment type="subunit">
    <text evidence="2 6">Interacts with ACTN1 (PubMed:22659164). Interacts with ACTN2 and ACTN4 (By similarity). Interacts with PDLIM4 (PubMed:22659164).</text>
</comment>
<comment type="subcellular location">
    <subcellularLocation>
        <location evidence="6">Cytoplasm</location>
    </subcellularLocation>
    <subcellularLocation>
        <location evidence="6">Cytoplasm</location>
        <location evidence="6">Cytoskeleton</location>
    </subcellularLocation>
    <subcellularLocation>
        <location evidence="2">Cytoplasm</location>
        <location evidence="2">Myofibril</location>
        <location evidence="2">Sarcomere</location>
        <location evidence="2">Z line</location>
    </subcellularLocation>
    <text evidence="6">Associates with actin stress fibers.</text>
</comment>
<comment type="tissue specificity">
    <text>Expressed most abundantly in heart, lung and liver, moderately in spleen and skeletal muscle, and at extremely low levels (if at all) in testis and brain tissues.</text>
</comment>
<organism>
    <name type="scientific">Rattus norvegicus</name>
    <name type="common">Rat</name>
    <dbReference type="NCBI Taxonomy" id="10116"/>
    <lineage>
        <taxon>Eukaryota</taxon>
        <taxon>Metazoa</taxon>
        <taxon>Chordata</taxon>
        <taxon>Craniata</taxon>
        <taxon>Vertebrata</taxon>
        <taxon>Euteleostomi</taxon>
        <taxon>Mammalia</taxon>
        <taxon>Eutheria</taxon>
        <taxon>Euarchontoglires</taxon>
        <taxon>Glires</taxon>
        <taxon>Rodentia</taxon>
        <taxon>Myomorpha</taxon>
        <taxon>Muroidea</taxon>
        <taxon>Muridae</taxon>
        <taxon>Murinae</taxon>
        <taxon>Rattus</taxon>
    </lineage>
</organism>
<accession>P52944</accession>
<accession>Q6IN45</accession>
<keyword id="KW-0007">Acetylation</keyword>
<keyword id="KW-0963">Cytoplasm</keyword>
<keyword id="KW-0206">Cytoskeleton</keyword>
<keyword id="KW-0440">LIM domain</keyword>
<keyword id="KW-0479">Metal-binding</keyword>
<keyword id="KW-0597">Phosphoprotein</keyword>
<keyword id="KW-1185">Reference proteome</keyword>
<keyword id="KW-0862">Zinc</keyword>
<reference key="1">
    <citation type="journal article" date="1995" name="Gene">
        <title>Cloning of a rat cDNA encoding a novel LIM domain protein with high homology to rat RIL.</title>
        <authorList>
            <person name="Wang H."/>
            <person name="Harrison-Shostak D.C."/>
            <person name="Lemasters J.J."/>
            <person name="Herman B."/>
        </authorList>
    </citation>
    <scope>NUCLEOTIDE SEQUENCE [MRNA]</scope>
    <source>
        <strain>Sprague-Dawley</strain>
        <tissue>Liver</tissue>
    </source>
</reference>
<reference key="2">
    <citation type="journal article" date="2004" name="Genome Res.">
        <title>The status, quality, and expansion of the NIH full-length cDNA project: the Mammalian Gene Collection (MGC).</title>
        <authorList>
            <consortium name="The MGC Project Team"/>
        </authorList>
    </citation>
    <scope>NUCLEOTIDE SEQUENCE [LARGE SCALE MRNA]</scope>
    <source>
        <tissue>Lung</tissue>
    </source>
</reference>
<reference key="3">
    <citation type="journal article" date="2012" name="Exp. Cell Res.">
        <title>CLP36 and RIL recruit alpha-actinin-1 to stress fibers and differentially regulate stress fiber dynamics in F2408 fibroblasts.</title>
        <authorList>
            <person name="Miyazaki K."/>
            <person name="Ohno K."/>
            <person name="Tamura N."/>
            <person name="Sasaki T."/>
            <person name="Sato K."/>
        </authorList>
    </citation>
    <scope>FUNCTION</scope>
    <scope>INTERACTION WITH ACTN1 AND PDLIM4</scope>
    <scope>SUBCELLULAR LOCATION</scope>
</reference>
<reference key="4">
    <citation type="journal article" date="2012" name="Nat. Commun.">
        <title>Quantitative maps of protein phosphorylation sites across 14 different rat organs and tissues.</title>
        <authorList>
            <person name="Lundby A."/>
            <person name="Secher A."/>
            <person name="Lage K."/>
            <person name="Nordsborg N.B."/>
            <person name="Dmytriyev A."/>
            <person name="Lundby C."/>
            <person name="Olsen J.V."/>
        </authorList>
    </citation>
    <scope>PHOSPHORYLATION [LARGE SCALE ANALYSIS] AT SER-90</scope>
    <scope>IDENTIFICATION BY MASS SPECTROMETRY [LARGE SCALE ANALYSIS]</scope>
</reference>
<gene>
    <name type="primary">Pdlim1</name>
    <name type="synonym">Clim1</name>
    <name type="synonym">Clp36</name>
</gene>
<feature type="initiator methionine" description="Removed" evidence="2">
    <location>
        <position position="1"/>
    </location>
</feature>
<feature type="chain" id="PRO_0000075861" description="PDZ and LIM domain protein 1">
    <location>
        <begin position="2"/>
        <end position="327"/>
    </location>
</feature>
<feature type="domain" description="PDZ" evidence="4">
    <location>
        <begin position="3"/>
        <end position="85"/>
    </location>
</feature>
<feature type="domain" description="LIM zinc-binding" evidence="3">
    <location>
        <begin position="256"/>
        <end position="315"/>
    </location>
</feature>
<feature type="region of interest" description="Disordered" evidence="5">
    <location>
        <begin position="161"/>
        <end position="186"/>
    </location>
</feature>
<feature type="binding site" evidence="1">
    <location>
        <position position="258"/>
    </location>
    <ligand>
        <name>Zn(2+)</name>
        <dbReference type="ChEBI" id="CHEBI:29105"/>
        <label>1</label>
    </ligand>
</feature>
<feature type="binding site" evidence="1">
    <location>
        <position position="261"/>
    </location>
    <ligand>
        <name>Zn(2+)</name>
        <dbReference type="ChEBI" id="CHEBI:29105"/>
        <label>1</label>
    </ligand>
</feature>
<feature type="binding site" evidence="1">
    <location>
        <position position="278"/>
    </location>
    <ligand>
        <name>Zn(2+)</name>
        <dbReference type="ChEBI" id="CHEBI:29105"/>
        <label>1</label>
    </ligand>
</feature>
<feature type="binding site" evidence="1">
    <location>
        <position position="281"/>
    </location>
    <ligand>
        <name>Zn(2+)</name>
        <dbReference type="ChEBI" id="CHEBI:29105"/>
        <label>1</label>
    </ligand>
</feature>
<feature type="binding site" evidence="1">
    <location>
        <position position="284"/>
    </location>
    <ligand>
        <name>Zn(2+)</name>
        <dbReference type="ChEBI" id="CHEBI:29105"/>
        <label>2</label>
    </ligand>
</feature>
<feature type="binding site" evidence="1">
    <location>
        <position position="287"/>
    </location>
    <ligand>
        <name>Zn(2+)</name>
        <dbReference type="ChEBI" id="CHEBI:29105"/>
        <label>2</label>
    </ligand>
</feature>
<feature type="binding site" evidence="1">
    <location>
        <position position="305"/>
    </location>
    <ligand>
        <name>Zn(2+)</name>
        <dbReference type="ChEBI" id="CHEBI:29105"/>
        <label>2</label>
    </ligand>
</feature>
<feature type="binding site" evidence="1">
    <location>
        <position position="308"/>
    </location>
    <ligand>
        <name>Zn(2+)</name>
        <dbReference type="ChEBI" id="CHEBI:29105"/>
        <label>2</label>
    </ligand>
</feature>
<feature type="modified residue" description="N-acetylthreonine" evidence="2">
    <location>
        <position position="2"/>
    </location>
</feature>
<feature type="modified residue" description="Phosphoserine" evidence="8">
    <location>
        <position position="90"/>
    </location>
</feature>
<feature type="modified residue" description="Phosphoserine" evidence="2">
    <location>
        <position position="130"/>
    </location>
</feature>
<feature type="modified residue" description="Phosphotyrosine" evidence="2">
    <location>
        <position position="142"/>
    </location>
</feature>
<feature type="modified residue" description="Phosphothreonine" evidence="2">
    <location>
        <position position="314"/>
    </location>
</feature>
<feature type="modified residue" description="Phosphotyrosine" evidence="2">
    <location>
        <position position="319"/>
    </location>
</feature>
<feature type="sequence conflict" description="In Ref. 1; AAA92046." evidence="7" ref="1">
    <original>R</original>
    <variation>P</variation>
    <location>
        <position position="277"/>
    </location>
</feature>
<dbReference type="EMBL" id="U23769">
    <property type="protein sequence ID" value="AAA92046.1"/>
    <property type="molecule type" value="mRNA"/>
</dbReference>
<dbReference type="EMBL" id="BC072465">
    <property type="protein sequence ID" value="AAH72465.1"/>
    <property type="molecule type" value="mRNA"/>
</dbReference>
<dbReference type="PIR" id="JC4385">
    <property type="entry name" value="JC4385"/>
</dbReference>
<dbReference type="RefSeq" id="NP_059061.1">
    <property type="nucleotide sequence ID" value="NM_017365.2"/>
</dbReference>
<dbReference type="SMR" id="P52944"/>
<dbReference type="CORUM" id="P52944"/>
<dbReference type="FunCoup" id="P52944">
    <property type="interactions" value="590"/>
</dbReference>
<dbReference type="IntAct" id="P52944">
    <property type="interactions" value="1"/>
</dbReference>
<dbReference type="STRING" id="10116.ENSRNOP00000022000"/>
<dbReference type="GlyGen" id="P52944">
    <property type="glycosylation" value="1 site"/>
</dbReference>
<dbReference type="iPTMnet" id="P52944"/>
<dbReference type="PhosphoSitePlus" id="P52944"/>
<dbReference type="SwissPalm" id="P52944"/>
<dbReference type="jPOST" id="P52944"/>
<dbReference type="PaxDb" id="10116-ENSRNOP00000022000"/>
<dbReference type="Ensembl" id="ENSRNOT00000022000.5">
    <property type="protein sequence ID" value="ENSRNOP00000022000.1"/>
    <property type="gene ID" value="ENSRNOG00000016166.5"/>
</dbReference>
<dbReference type="GeneID" id="54133"/>
<dbReference type="KEGG" id="rno:54133"/>
<dbReference type="UCSC" id="RGD:68324">
    <property type="organism name" value="rat"/>
</dbReference>
<dbReference type="AGR" id="RGD:68324"/>
<dbReference type="CTD" id="9124"/>
<dbReference type="RGD" id="68324">
    <property type="gene designation" value="Pdlim1"/>
</dbReference>
<dbReference type="eggNOG" id="KOG1703">
    <property type="taxonomic scope" value="Eukaryota"/>
</dbReference>
<dbReference type="GeneTree" id="ENSGT00940000155525"/>
<dbReference type="HOGENOM" id="CLU_038114_1_1_1"/>
<dbReference type="InParanoid" id="P52944"/>
<dbReference type="OMA" id="QIYCETH"/>
<dbReference type="OrthoDB" id="1293114at2759"/>
<dbReference type="PhylomeDB" id="P52944"/>
<dbReference type="TreeFam" id="TF106408"/>
<dbReference type="PRO" id="PR:P52944"/>
<dbReference type="Proteomes" id="UP000002494">
    <property type="component" value="Chromosome 1"/>
</dbReference>
<dbReference type="Bgee" id="ENSRNOG00000016166">
    <property type="expression patterns" value="Expressed in jejunum and 20 other cell types or tissues"/>
</dbReference>
<dbReference type="GO" id="GO:0015629">
    <property type="term" value="C:actin cytoskeleton"/>
    <property type="evidence" value="ECO:0000314"/>
    <property type="project" value="UniProtKB"/>
</dbReference>
<dbReference type="GO" id="GO:0005912">
    <property type="term" value="C:adherens junction"/>
    <property type="evidence" value="ECO:0000318"/>
    <property type="project" value="GO_Central"/>
</dbReference>
<dbReference type="GO" id="GO:0005737">
    <property type="term" value="C:cytoplasm"/>
    <property type="evidence" value="ECO:0000314"/>
    <property type="project" value="UniProtKB"/>
</dbReference>
<dbReference type="GO" id="GO:0005856">
    <property type="term" value="C:cytoskeleton"/>
    <property type="evidence" value="ECO:0000266"/>
    <property type="project" value="RGD"/>
</dbReference>
<dbReference type="GO" id="GO:0031941">
    <property type="term" value="C:filamentous actin"/>
    <property type="evidence" value="ECO:0000318"/>
    <property type="project" value="GO_Central"/>
</dbReference>
<dbReference type="GO" id="GO:0001725">
    <property type="term" value="C:stress fiber"/>
    <property type="evidence" value="ECO:0000314"/>
    <property type="project" value="UniProtKB"/>
</dbReference>
<dbReference type="GO" id="GO:0005667">
    <property type="term" value="C:transcription regulator complex"/>
    <property type="evidence" value="ECO:0000266"/>
    <property type="project" value="RGD"/>
</dbReference>
<dbReference type="GO" id="GO:0030018">
    <property type="term" value="C:Z disc"/>
    <property type="evidence" value="ECO:0000314"/>
    <property type="project" value="UniProtKB"/>
</dbReference>
<dbReference type="GO" id="GO:0003779">
    <property type="term" value="F:actin binding"/>
    <property type="evidence" value="ECO:0000314"/>
    <property type="project" value="UniProtKB"/>
</dbReference>
<dbReference type="GO" id="GO:0046872">
    <property type="term" value="F:metal ion binding"/>
    <property type="evidence" value="ECO:0007669"/>
    <property type="project" value="UniProtKB-KW"/>
</dbReference>
<dbReference type="GO" id="GO:0051371">
    <property type="term" value="F:muscle alpha-actinin binding"/>
    <property type="evidence" value="ECO:0000318"/>
    <property type="project" value="GO_Central"/>
</dbReference>
<dbReference type="GO" id="GO:0003713">
    <property type="term" value="F:transcription coactivator activity"/>
    <property type="evidence" value="ECO:0000266"/>
    <property type="project" value="RGD"/>
</dbReference>
<dbReference type="GO" id="GO:0030036">
    <property type="term" value="P:actin cytoskeleton organization"/>
    <property type="evidence" value="ECO:0000315"/>
    <property type="project" value="UniProtKB"/>
</dbReference>
<dbReference type="GO" id="GO:0030950">
    <property type="term" value="P:establishment or maintenance of actin cytoskeleton polarity"/>
    <property type="evidence" value="ECO:0000315"/>
    <property type="project" value="UniProtKB"/>
</dbReference>
<dbReference type="GO" id="GO:0010761">
    <property type="term" value="P:fibroblast migration"/>
    <property type="evidence" value="ECO:0000315"/>
    <property type="project" value="UniProtKB"/>
</dbReference>
<dbReference type="GO" id="GO:0007507">
    <property type="term" value="P:heart development"/>
    <property type="evidence" value="ECO:0000318"/>
    <property type="project" value="GO_Central"/>
</dbReference>
<dbReference type="GO" id="GO:0030011">
    <property type="term" value="P:maintenance of cell polarity"/>
    <property type="evidence" value="ECO:0000315"/>
    <property type="project" value="UniProtKB"/>
</dbReference>
<dbReference type="GO" id="GO:0061061">
    <property type="term" value="P:muscle structure development"/>
    <property type="evidence" value="ECO:0000318"/>
    <property type="project" value="GO_Central"/>
</dbReference>
<dbReference type="GO" id="GO:0006357">
    <property type="term" value="P:regulation of transcription by RNA polymerase II"/>
    <property type="evidence" value="ECO:0000266"/>
    <property type="project" value="RGD"/>
</dbReference>
<dbReference type="GO" id="GO:0001666">
    <property type="term" value="P:response to hypoxia"/>
    <property type="evidence" value="ECO:0000270"/>
    <property type="project" value="RGD"/>
</dbReference>
<dbReference type="GO" id="GO:0043149">
    <property type="term" value="P:stress fiber assembly"/>
    <property type="evidence" value="ECO:0000315"/>
    <property type="project" value="UniProtKB"/>
</dbReference>
<dbReference type="CDD" id="cd09448">
    <property type="entry name" value="LIM_CLP36"/>
    <property type="match status" value="1"/>
</dbReference>
<dbReference type="CDD" id="cd06753">
    <property type="entry name" value="PDZ_PDLIM-like"/>
    <property type="match status" value="1"/>
</dbReference>
<dbReference type="FunFam" id="2.10.110.10:FF:000026">
    <property type="entry name" value="PDZ and LIM domain protein 3"/>
    <property type="match status" value="1"/>
</dbReference>
<dbReference type="FunFam" id="2.30.42.10:FF:000055">
    <property type="entry name" value="PDZ and LIM domain protein 3"/>
    <property type="match status" value="1"/>
</dbReference>
<dbReference type="Gene3D" id="2.30.42.10">
    <property type="match status" value="1"/>
</dbReference>
<dbReference type="Gene3D" id="2.10.110.10">
    <property type="entry name" value="Cysteine Rich Protein"/>
    <property type="match status" value="1"/>
</dbReference>
<dbReference type="InterPro" id="IPR031847">
    <property type="entry name" value="PDLI1-4/Zasp-like_mid"/>
</dbReference>
<dbReference type="InterPro" id="IPR028537">
    <property type="entry name" value="PDLIM1_LIM"/>
</dbReference>
<dbReference type="InterPro" id="IPR001478">
    <property type="entry name" value="PDZ"/>
</dbReference>
<dbReference type="InterPro" id="IPR050604">
    <property type="entry name" value="PDZ-LIM_domain"/>
</dbReference>
<dbReference type="InterPro" id="IPR036034">
    <property type="entry name" value="PDZ_sf"/>
</dbReference>
<dbReference type="InterPro" id="IPR006643">
    <property type="entry name" value="Zasp-like_motif"/>
</dbReference>
<dbReference type="InterPro" id="IPR001781">
    <property type="entry name" value="Znf_LIM"/>
</dbReference>
<dbReference type="PANTHER" id="PTHR24214:SF5">
    <property type="entry name" value="PDZ AND LIM DOMAIN PROTEIN 1"/>
    <property type="match status" value="1"/>
</dbReference>
<dbReference type="PANTHER" id="PTHR24214">
    <property type="entry name" value="PDZ AND LIM DOMAIN PROTEIN ZASP"/>
    <property type="match status" value="1"/>
</dbReference>
<dbReference type="Pfam" id="PF15936">
    <property type="entry name" value="DUF4749"/>
    <property type="match status" value="1"/>
</dbReference>
<dbReference type="Pfam" id="PF00412">
    <property type="entry name" value="LIM"/>
    <property type="match status" value="1"/>
</dbReference>
<dbReference type="Pfam" id="PF00595">
    <property type="entry name" value="PDZ"/>
    <property type="match status" value="1"/>
</dbReference>
<dbReference type="SMART" id="SM00132">
    <property type="entry name" value="LIM"/>
    <property type="match status" value="1"/>
</dbReference>
<dbReference type="SMART" id="SM00228">
    <property type="entry name" value="PDZ"/>
    <property type="match status" value="1"/>
</dbReference>
<dbReference type="SMART" id="SM00735">
    <property type="entry name" value="ZM"/>
    <property type="match status" value="1"/>
</dbReference>
<dbReference type="SUPFAM" id="SSF57716">
    <property type="entry name" value="Glucocorticoid receptor-like (DNA-binding domain)"/>
    <property type="match status" value="2"/>
</dbReference>
<dbReference type="SUPFAM" id="SSF50156">
    <property type="entry name" value="PDZ domain-like"/>
    <property type="match status" value="1"/>
</dbReference>
<dbReference type="PROSITE" id="PS00478">
    <property type="entry name" value="LIM_DOMAIN_1"/>
    <property type="match status" value="1"/>
</dbReference>
<dbReference type="PROSITE" id="PS50023">
    <property type="entry name" value="LIM_DOMAIN_2"/>
    <property type="match status" value="1"/>
</dbReference>
<dbReference type="PROSITE" id="PS50106">
    <property type="entry name" value="PDZ"/>
    <property type="match status" value="1"/>
</dbReference>
<protein>
    <recommendedName>
        <fullName>PDZ and LIM domain protein 1</fullName>
    </recommendedName>
    <alternativeName>
        <fullName>C-terminal LIM domain protein 1</fullName>
    </alternativeName>
    <alternativeName>
        <fullName>Elfin</fullName>
    </alternativeName>
    <alternativeName>
        <fullName>LIM domain protein CLP-36</fullName>
    </alternativeName>
</protein>
<proteinExistence type="evidence at protein level"/>